<evidence type="ECO:0000255" key="1">
    <source>
        <dbReference type="HAMAP-Rule" id="MF_01416"/>
    </source>
</evidence>
<feature type="chain" id="PRO_1000184651" description="ATP synthase subunit delta">
    <location>
        <begin position="1"/>
        <end position="180"/>
    </location>
</feature>
<organism>
    <name type="scientific">Bacillus cereus (strain B4264)</name>
    <dbReference type="NCBI Taxonomy" id="405532"/>
    <lineage>
        <taxon>Bacteria</taxon>
        <taxon>Bacillati</taxon>
        <taxon>Bacillota</taxon>
        <taxon>Bacilli</taxon>
        <taxon>Bacillales</taxon>
        <taxon>Bacillaceae</taxon>
        <taxon>Bacillus</taxon>
        <taxon>Bacillus cereus group</taxon>
    </lineage>
</organism>
<dbReference type="EMBL" id="CP001176">
    <property type="protein sequence ID" value="ACK61730.1"/>
    <property type="molecule type" value="Genomic_DNA"/>
</dbReference>
<dbReference type="RefSeq" id="WP_000064683.1">
    <property type="nucleotide sequence ID" value="NZ_VEHB01000004.1"/>
</dbReference>
<dbReference type="SMR" id="B7HFK5"/>
<dbReference type="GeneID" id="93005815"/>
<dbReference type="KEGG" id="bcb:BCB4264_A5430"/>
<dbReference type="HOGENOM" id="CLU_085114_4_1_9"/>
<dbReference type="Proteomes" id="UP000007096">
    <property type="component" value="Chromosome"/>
</dbReference>
<dbReference type="GO" id="GO:0005886">
    <property type="term" value="C:plasma membrane"/>
    <property type="evidence" value="ECO:0007669"/>
    <property type="project" value="UniProtKB-SubCell"/>
</dbReference>
<dbReference type="GO" id="GO:0045259">
    <property type="term" value="C:proton-transporting ATP synthase complex"/>
    <property type="evidence" value="ECO:0007669"/>
    <property type="project" value="UniProtKB-KW"/>
</dbReference>
<dbReference type="GO" id="GO:0046933">
    <property type="term" value="F:proton-transporting ATP synthase activity, rotational mechanism"/>
    <property type="evidence" value="ECO:0007669"/>
    <property type="project" value="UniProtKB-UniRule"/>
</dbReference>
<dbReference type="Gene3D" id="1.10.520.20">
    <property type="entry name" value="N-terminal domain of the delta subunit of the F1F0-ATP synthase"/>
    <property type="match status" value="1"/>
</dbReference>
<dbReference type="HAMAP" id="MF_01416">
    <property type="entry name" value="ATP_synth_delta_bact"/>
    <property type="match status" value="1"/>
</dbReference>
<dbReference type="InterPro" id="IPR026015">
    <property type="entry name" value="ATP_synth_OSCP/delta_N_sf"/>
</dbReference>
<dbReference type="InterPro" id="IPR020781">
    <property type="entry name" value="ATPase_OSCP/d_CS"/>
</dbReference>
<dbReference type="InterPro" id="IPR000711">
    <property type="entry name" value="ATPase_OSCP/dsu"/>
</dbReference>
<dbReference type="NCBIfam" id="TIGR01145">
    <property type="entry name" value="ATP_synt_delta"/>
    <property type="match status" value="1"/>
</dbReference>
<dbReference type="NCBIfam" id="NF004402">
    <property type="entry name" value="PRK05758.2-2"/>
    <property type="match status" value="1"/>
</dbReference>
<dbReference type="NCBIfam" id="NF004403">
    <property type="entry name" value="PRK05758.2-4"/>
    <property type="match status" value="1"/>
</dbReference>
<dbReference type="PANTHER" id="PTHR11910">
    <property type="entry name" value="ATP SYNTHASE DELTA CHAIN"/>
    <property type="match status" value="1"/>
</dbReference>
<dbReference type="Pfam" id="PF00213">
    <property type="entry name" value="OSCP"/>
    <property type="match status" value="1"/>
</dbReference>
<dbReference type="PRINTS" id="PR00125">
    <property type="entry name" value="ATPASEDELTA"/>
</dbReference>
<dbReference type="SUPFAM" id="SSF47928">
    <property type="entry name" value="N-terminal domain of the delta subunit of the F1F0-ATP synthase"/>
    <property type="match status" value="1"/>
</dbReference>
<dbReference type="PROSITE" id="PS00389">
    <property type="entry name" value="ATPASE_DELTA"/>
    <property type="match status" value="1"/>
</dbReference>
<keyword id="KW-0066">ATP synthesis</keyword>
<keyword id="KW-1003">Cell membrane</keyword>
<keyword id="KW-0139">CF(1)</keyword>
<keyword id="KW-0375">Hydrogen ion transport</keyword>
<keyword id="KW-0406">Ion transport</keyword>
<keyword id="KW-0472">Membrane</keyword>
<keyword id="KW-0813">Transport</keyword>
<name>ATPD_BACC4</name>
<accession>B7HFK5</accession>
<protein>
    <recommendedName>
        <fullName evidence="1">ATP synthase subunit delta</fullName>
    </recommendedName>
    <alternativeName>
        <fullName evidence="1">ATP synthase F(1) sector subunit delta</fullName>
    </alternativeName>
    <alternativeName>
        <fullName evidence="1">F-type ATPase subunit delta</fullName>
        <shortName evidence="1">F-ATPase subunit delta</shortName>
    </alternativeName>
</protein>
<reference key="1">
    <citation type="submission" date="2008-10" db="EMBL/GenBank/DDBJ databases">
        <title>Genome sequence of Bacillus cereus B4264.</title>
        <authorList>
            <person name="Dodson R.J."/>
            <person name="Durkin A.S."/>
            <person name="Rosovitz M.J."/>
            <person name="Rasko D.A."/>
            <person name="Hoffmaster A."/>
            <person name="Ravel J."/>
            <person name="Sutton G."/>
        </authorList>
    </citation>
    <scope>NUCLEOTIDE SEQUENCE [LARGE SCALE GENOMIC DNA]</scope>
    <source>
        <strain>B4264</strain>
    </source>
</reference>
<comment type="function">
    <text evidence="1">F(1)F(0) ATP synthase produces ATP from ADP in the presence of a proton or sodium gradient. F-type ATPases consist of two structural domains, F(1) containing the extramembraneous catalytic core and F(0) containing the membrane proton channel, linked together by a central stalk and a peripheral stalk. During catalysis, ATP synthesis in the catalytic domain of F(1) is coupled via a rotary mechanism of the central stalk subunits to proton translocation.</text>
</comment>
<comment type="function">
    <text evidence="1">This protein is part of the stalk that links CF(0) to CF(1). It either transmits conformational changes from CF(0) to CF(1) or is implicated in proton conduction.</text>
</comment>
<comment type="subunit">
    <text evidence="1">F-type ATPases have 2 components, F(1) - the catalytic core - and F(0) - the membrane proton channel. F(1) has five subunits: alpha(3), beta(3), gamma(1), delta(1), epsilon(1). F(0) has three main subunits: a(1), b(2) and c(10-14). The alpha and beta chains form an alternating ring which encloses part of the gamma chain. F(1) is attached to F(0) by a central stalk formed by the gamma and epsilon chains, while a peripheral stalk is formed by the delta and b chains.</text>
</comment>
<comment type="subcellular location">
    <subcellularLocation>
        <location evidence="1">Cell membrane</location>
        <topology evidence="1">Peripheral membrane protein</topology>
    </subcellularLocation>
</comment>
<comment type="similarity">
    <text evidence="1">Belongs to the ATPase delta chain family.</text>
</comment>
<sequence>MSNGIVAKRYAVALFKIAKEKHVLEMFEEELRLVQNVYVKNGELHSFLTQPNISKEQKKTFLANVFGSVSESILNTLYILIDNKRIDILPEIADEYVVLANEERNVADATVYSTRLLSEEEKLNIAEAFAKRTGKDAIRVKNVVDEDLLGGIKVRIGNRIYDGSLQGKLARIQRELMKNR</sequence>
<gene>
    <name evidence="1" type="primary">atpH</name>
    <name type="ordered locus">BCB4264_A5430</name>
</gene>
<proteinExistence type="inferred from homology"/>